<evidence type="ECO:0000250" key="1"/>
<evidence type="ECO:0000250" key="2">
    <source>
        <dbReference type="UniProtKB" id="P0AFG6"/>
    </source>
</evidence>
<evidence type="ECO:0000255" key="3">
    <source>
        <dbReference type="PROSITE-ProRule" id="PRU01066"/>
    </source>
</evidence>
<evidence type="ECO:0000255" key="4">
    <source>
        <dbReference type="PROSITE-ProRule" id="PRU01170"/>
    </source>
</evidence>
<evidence type="ECO:0000305" key="5"/>
<sequence>MSIKIIIPSLGESVTEATIAKWYKKLGDAVKTDELLLEIETDKVTLEVNAPCNGTIGKISKTDGANVTVGEEVGEINEIADTDTAWINNKKQEVSQHTSEQLVDKPAMASNILAPSVQKLVTENKLDPNNIKGTGRGGRITKYDVLETINTTPITIETHAINKTNEERTQRVRMSRLRKTIAQRLKDSQNTAAILTTFNEIDMSKVIALRNQYKEEFEKKHTVKLGFMSFFVKATIEALKLIPSINAEIDGDDLLYKNYYDIGVAVGTEQGLVVPVIRDADKMSFADIEQAIGNLAKKAREGKLSISDLSGGTFSISNGGVYGSLLSTPIINPPQSGILGLHKTEERAVVIDGKIEIRPMMYIALSYDHRIIDGKEGVSFLVKIKNLIENPEKLLLNL</sequence>
<comment type="function">
    <text evidence="2">E2 component of the 2-oxoglutarate dehydrogenase (OGDH) complex which catalyzes the second step in the conversion of 2-oxoglutarate to succinyl-CoA and CO(2).</text>
</comment>
<comment type="catalytic activity">
    <reaction evidence="2">
        <text>N(6)-[(R)-dihydrolipoyl]-L-lysyl-[protein] + succinyl-CoA = N(6)-[(R)-S(8)-succinyldihydrolipoyl]-L-lysyl-[protein] + CoA</text>
        <dbReference type="Rhea" id="RHEA:15213"/>
        <dbReference type="Rhea" id="RHEA-COMP:10475"/>
        <dbReference type="Rhea" id="RHEA-COMP:20092"/>
        <dbReference type="ChEBI" id="CHEBI:57287"/>
        <dbReference type="ChEBI" id="CHEBI:57292"/>
        <dbReference type="ChEBI" id="CHEBI:83100"/>
        <dbReference type="ChEBI" id="CHEBI:83120"/>
        <dbReference type="EC" id="2.3.1.61"/>
    </reaction>
</comment>
<comment type="cofactor">
    <cofactor evidence="1">
        <name>(R)-lipoate</name>
        <dbReference type="ChEBI" id="CHEBI:83088"/>
    </cofactor>
    <text evidence="1">Binds 1 lipoyl cofactor covalently.</text>
</comment>
<comment type="pathway">
    <text>Amino-acid degradation; L-lysine degradation via saccharopine pathway; glutaryl-CoA from L-lysine: step 6/6.</text>
</comment>
<comment type="subunit">
    <text evidence="2">Forms a 24-polypeptide structural core with octahedral symmetry. Part of the 2-oxoglutarate dehydrogenase (OGDH) complex composed of E1 (2-oxoglutarate dehydrogenase), E2 (dihydrolipoamide succinyltransferase) and E3 (dihydrolipoamide dehydrogenase); the complex contains multiple copies of the three enzymatic components (E1, E2 and E3).</text>
</comment>
<comment type="similarity">
    <text evidence="5">Belongs to the 2-oxoacid dehydrogenase family.</text>
</comment>
<accession>Q68XI8</accession>
<proteinExistence type="inferred from homology"/>
<reference key="1">
    <citation type="journal article" date="2004" name="J. Bacteriol.">
        <title>Complete genome sequence of Rickettsia typhi and comparison with sequences of other Rickettsiae.</title>
        <authorList>
            <person name="McLeod M.P."/>
            <person name="Qin X."/>
            <person name="Karpathy S.E."/>
            <person name="Gioia J."/>
            <person name="Highlander S.K."/>
            <person name="Fox G.E."/>
            <person name="McNeill T.Z."/>
            <person name="Jiang H."/>
            <person name="Muzny D."/>
            <person name="Jacob L.S."/>
            <person name="Hawes A.C."/>
            <person name="Sodergren E."/>
            <person name="Gill R."/>
            <person name="Hume J."/>
            <person name="Morgan M."/>
            <person name="Fan G."/>
            <person name="Amin A.G."/>
            <person name="Gibbs R.A."/>
            <person name="Hong C."/>
            <person name="Yu X.-J."/>
            <person name="Walker D.H."/>
            <person name="Weinstock G.M."/>
        </authorList>
    </citation>
    <scope>NUCLEOTIDE SEQUENCE [LARGE SCALE GENOMIC DNA]</scope>
    <source>
        <strain>ATCC VR-144 / Wilmington</strain>
    </source>
</reference>
<organism>
    <name type="scientific">Rickettsia typhi (strain ATCC VR-144 / Wilmington)</name>
    <dbReference type="NCBI Taxonomy" id="257363"/>
    <lineage>
        <taxon>Bacteria</taxon>
        <taxon>Pseudomonadati</taxon>
        <taxon>Pseudomonadota</taxon>
        <taxon>Alphaproteobacteria</taxon>
        <taxon>Rickettsiales</taxon>
        <taxon>Rickettsiaceae</taxon>
        <taxon>Rickettsieae</taxon>
        <taxon>Rickettsia</taxon>
        <taxon>typhus group</taxon>
    </lineage>
</organism>
<protein>
    <recommendedName>
        <fullName>Dihydrolipoyllysine-residue succinyltransferase component of 2-oxoglutarate dehydrogenase complex</fullName>
        <ecNumber evidence="2">2.3.1.61</ecNumber>
    </recommendedName>
    <alternativeName>
        <fullName>2-oxoglutarate dehydrogenase complex component E2</fullName>
        <shortName>OGDC-E2</shortName>
    </alternativeName>
    <alternativeName>
        <fullName>Dihydrolipoamide succinyltransferase component of 2-oxoglutarate dehydrogenase complex</fullName>
    </alternativeName>
</protein>
<feature type="chain" id="PRO_0000288097" description="Dihydrolipoyllysine-residue succinyltransferase component of 2-oxoglutarate dehydrogenase complex">
    <location>
        <begin position="1"/>
        <end position="398"/>
    </location>
</feature>
<feature type="domain" description="Lipoyl-binding" evidence="3">
    <location>
        <begin position="2"/>
        <end position="77"/>
    </location>
</feature>
<feature type="domain" description="Peripheral subunit-binding (PSBD)" evidence="4">
    <location>
        <begin position="112"/>
        <end position="149"/>
    </location>
</feature>
<feature type="active site" evidence="2">
    <location>
        <position position="369"/>
    </location>
</feature>
<feature type="active site" evidence="2">
    <location>
        <position position="373"/>
    </location>
</feature>
<feature type="modified residue" description="N6-lipoyllysine" evidence="3">
    <location>
        <position position="43"/>
    </location>
</feature>
<name>ODO2_RICTY</name>
<keyword id="KW-0012">Acyltransferase</keyword>
<keyword id="KW-0450">Lipoyl</keyword>
<keyword id="KW-0808">Transferase</keyword>
<keyword id="KW-0816">Tricarboxylic acid cycle</keyword>
<gene>
    <name type="primary">sucB</name>
    <name type="ordered locus">RT0170</name>
</gene>
<dbReference type="EC" id="2.3.1.61" evidence="2"/>
<dbReference type="EMBL" id="AE017197">
    <property type="protein sequence ID" value="AAU03654.1"/>
    <property type="molecule type" value="Genomic_DNA"/>
</dbReference>
<dbReference type="SMR" id="Q68XI8"/>
<dbReference type="KEGG" id="rty:RT0170"/>
<dbReference type="eggNOG" id="COG0508">
    <property type="taxonomic scope" value="Bacteria"/>
</dbReference>
<dbReference type="HOGENOM" id="CLU_016733_0_0_5"/>
<dbReference type="OrthoDB" id="9805770at2"/>
<dbReference type="UniPathway" id="UPA00868">
    <property type="reaction ID" value="UER00840"/>
</dbReference>
<dbReference type="Proteomes" id="UP000000604">
    <property type="component" value="Chromosome"/>
</dbReference>
<dbReference type="GO" id="GO:0005829">
    <property type="term" value="C:cytosol"/>
    <property type="evidence" value="ECO:0007669"/>
    <property type="project" value="TreeGrafter"/>
</dbReference>
<dbReference type="GO" id="GO:0045252">
    <property type="term" value="C:oxoglutarate dehydrogenase complex"/>
    <property type="evidence" value="ECO:0007669"/>
    <property type="project" value="InterPro"/>
</dbReference>
<dbReference type="GO" id="GO:0004149">
    <property type="term" value="F:dihydrolipoyllysine-residue succinyltransferase activity"/>
    <property type="evidence" value="ECO:0007669"/>
    <property type="project" value="UniProtKB-EC"/>
</dbReference>
<dbReference type="GO" id="GO:0033512">
    <property type="term" value="P:L-lysine catabolic process to acetyl-CoA via saccharopine"/>
    <property type="evidence" value="ECO:0007669"/>
    <property type="project" value="UniProtKB-UniPathway"/>
</dbReference>
<dbReference type="GO" id="GO:0006099">
    <property type="term" value="P:tricarboxylic acid cycle"/>
    <property type="evidence" value="ECO:0007669"/>
    <property type="project" value="UniProtKB-KW"/>
</dbReference>
<dbReference type="CDD" id="cd06849">
    <property type="entry name" value="lipoyl_domain"/>
    <property type="match status" value="1"/>
</dbReference>
<dbReference type="FunFam" id="3.30.559.10:FF:000007">
    <property type="entry name" value="Dihydrolipoamide acetyltransferase component of pyruvate dehydrogenase complex"/>
    <property type="match status" value="1"/>
</dbReference>
<dbReference type="Gene3D" id="2.40.50.100">
    <property type="match status" value="1"/>
</dbReference>
<dbReference type="Gene3D" id="3.30.559.10">
    <property type="entry name" value="Chloramphenicol acetyltransferase-like domain"/>
    <property type="match status" value="1"/>
</dbReference>
<dbReference type="Gene3D" id="4.10.320.10">
    <property type="entry name" value="E3-binding domain"/>
    <property type="match status" value="1"/>
</dbReference>
<dbReference type="InterPro" id="IPR003016">
    <property type="entry name" value="2-oxoA_DH_lipoyl-BS"/>
</dbReference>
<dbReference type="InterPro" id="IPR050537">
    <property type="entry name" value="2-oxoacid_dehydrogenase"/>
</dbReference>
<dbReference type="InterPro" id="IPR001078">
    <property type="entry name" value="2-oxoacid_DH_actylTfrase"/>
</dbReference>
<dbReference type="InterPro" id="IPR000089">
    <property type="entry name" value="Biotin_lipoyl"/>
</dbReference>
<dbReference type="InterPro" id="IPR023213">
    <property type="entry name" value="CAT-like_dom_sf"/>
</dbReference>
<dbReference type="InterPro" id="IPR036625">
    <property type="entry name" value="E3-bd_dom_sf"/>
</dbReference>
<dbReference type="InterPro" id="IPR004167">
    <property type="entry name" value="PSBD"/>
</dbReference>
<dbReference type="InterPro" id="IPR011053">
    <property type="entry name" value="Single_hybrid_motif"/>
</dbReference>
<dbReference type="InterPro" id="IPR006255">
    <property type="entry name" value="SucB"/>
</dbReference>
<dbReference type="NCBIfam" id="NF004309">
    <property type="entry name" value="PRK05704.1"/>
    <property type="match status" value="1"/>
</dbReference>
<dbReference type="NCBIfam" id="TIGR01347">
    <property type="entry name" value="sucB"/>
    <property type="match status" value="1"/>
</dbReference>
<dbReference type="PANTHER" id="PTHR43416:SF5">
    <property type="entry name" value="DIHYDROLIPOYLLYSINE-RESIDUE SUCCINYLTRANSFERASE COMPONENT OF 2-OXOGLUTARATE DEHYDROGENASE COMPLEX, MITOCHONDRIAL"/>
    <property type="match status" value="1"/>
</dbReference>
<dbReference type="PANTHER" id="PTHR43416">
    <property type="entry name" value="DIHYDROLIPOYLLYSINE-RESIDUE SUCCINYLTRANSFERASE COMPONENT OF 2-OXOGLUTARATE DEHYDROGENASE COMPLEX, MITOCHONDRIAL-RELATED"/>
    <property type="match status" value="1"/>
</dbReference>
<dbReference type="Pfam" id="PF00198">
    <property type="entry name" value="2-oxoacid_dh"/>
    <property type="match status" value="1"/>
</dbReference>
<dbReference type="Pfam" id="PF00364">
    <property type="entry name" value="Biotin_lipoyl"/>
    <property type="match status" value="1"/>
</dbReference>
<dbReference type="Pfam" id="PF02817">
    <property type="entry name" value="E3_binding"/>
    <property type="match status" value="1"/>
</dbReference>
<dbReference type="SUPFAM" id="SSF52777">
    <property type="entry name" value="CoA-dependent acyltransferases"/>
    <property type="match status" value="1"/>
</dbReference>
<dbReference type="SUPFAM" id="SSF47005">
    <property type="entry name" value="Peripheral subunit-binding domain of 2-oxo acid dehydrogenase complex"/>
    <property type="match status" value="1"/>
</dbReference>
<dbReference type="SUPFAM" id="SSF51230">
    <property type="entry name" value="Single hybrid motif"/>
    <property type="match status" value="1"/>
</dbReference>
<dbReference type="PROSITE" id="PS50968">
    <property type="entry name" value="BIOTINYL_LIPOYL"/>
    <property type="match status" value="1"/>
</dbReference>
<dbReference type="PROSITE" id="PS00189">
    <property type="entry name" value="LIPOYL"/>
    <property type="match status" value="1"/>
</dbReference>
<dbReference type="PROSITE" id="PS51826">
    <property type="entry name" value="PSBD"/>
    <property type="match status" value="1"/>
</dbReference>